<gene>
    <name evidence="2" type="primary">whiA</name>
    <name type="ordered locus">MMAR_2230</name>
</gene>
<feature type="chain" id="PRO_0000376528" description="Probable cell division protein WhiA">
    <location>
        <begin position="1"/>
        <end position="327"/>
    </location>
</feature>
<feature type="DNA-binding region" description="H-T-H motif" evidence="2">
    <location>
        <begin position="275"/>
        <end position="308"/>
    </location>
</feature>
<proteinExistence type="inferred from homology"/>
<reference key="1">
    <citation type="journal article" date="2008" name="Genome Res.">
        <title>Insights from the complete genome sequence of Mycobacterium marinum on the evolution of Mycobacterium tuberculosis.</title>
        <authorList>
            <person name="Stinear T.P."/>
            <person name="Seemann T."/>
            <person name="Harrison P.F."/>
            <person name="Jenkin G.A."/>
            <person name="Davies J.K."/>
            <person name="Johnson P.D."/>
            <person name="Abdellah Z."/>
            <person name="Arrowsmith C."/>
            <person name="Chillingworth T."/>
            <person name="Churcher C."/>
            <person name="Clarke K."/>
            <person name="Cronin A."/>
            <person name="Davis P."/>
            <person name="Goodhead I."/>
            <person name="Holroyd N."/>
            <person name="Jagels K."/>
            <person name="Lord A."/>
            <person name="Moule S."/>
            <person name="Mungall K."/>
            <person name="Norbertczak H."/>
            <person name="Quail M.A."/>
            <person name="Rabbinowitsch E."/>
            <person name="Walker D."/>
            <person name="White B."/>
            <person name="Whitehead S."/>
            <person name="Small P.L."/>
            <person name="Brosch R."/>
            <person name="Ramakrishnan L."/>
            <person name="Fischbach M.A."/>
            <person name="Parkhill J."/>
            <person name="Cole S.T."/>
        </authorList>
    </citation>
    <scope>NUCLEOTIDE SEQUENCE [LARGE SCALE GENOMIC DNA]</scope>
    <source>
        <strain>ATCC BAA-535 / M</strain>
    </source>
</reference>
<comment type="function">
    <text evidence="2">Involved in cell division and chromosome segregation.</text>
</comment>
<comment type="similarity">
    <text evidence="2">Belongs to the WhiA family.</text>
</comment>
<comment type="sequence caution" evidence="1">
    <conflict type="erroneous initiation">
        <sequence resource="EMBL-CDS" id="ACC40679"/>
    </conflict>
    <text>Truncated N-terminus.</text>
</comment>
<evidence type="ECO:0000250" key="1">
    <source>
        <dbReference type="UniProtKB" id="P9WF45"/>
    </source>
</evidence>
<evidence type="ECO:0000255" key="2">
    <source>
        <dbReference type="HAMAP-Rule" id="MF_01420"/>
    </source>
</evidence>
<accession>B2HP75</accession>
<keyword id="KW-0131">Cell cycle</keyword>
<keyword id="KW-0132">Cell division</keyword>
<keyword id="KW-0238">DNA-binding</keyword>
<keyword id="KW-1185">Reference proteome</keyword>
<protein>
    <recommendedName>
        <fullName evidence="2">Probable cell division protein WhiA</fullName>
    </recommendedName>
</protein>
<dbReference type="EMBL" id="CP000854">
    <property type="protein sequence ID" value="ACC40679.1"/>
    <property type="status" value="ALT_INIT"/>
    <property type="molecule type" value="Genomic_DNA"/>
</dbReference>
<dbReference type="SMR" id="B2HP75"/>
<dbReference type="STRING" id="216594.MMAR_2230"/>
<dbReference type="KEGG" id="mmi:MMAR_2230"/>
<dbReference type="eggNOG" id="COG1481">
    <property type="taxonomic scope" value="Bacteria"/>
</dbReference>
<dbReference type="HOGENOM" id="CLU_053282_0_0_11"/>
<dbReference type="Proteomes" id="UP000001190">
    <property type="component" value="Chromosome"/>
</dbReference>
<dbReference type="GO" id="GO:0003677">
    <property type="term" value="F:DNA binding"/>
    <property type="evidence" value="ECO:0007669"/>
    <property type="project" value="UniProtKB-UniRule"/>
</dbReference>
<dbReference type="GO" id="GO:0051301">
    <property type="term" value="P:cell division"/>
    <property type="evidence" value="ECO:0007669"/>
    <property type="project" value="UniProtKB-UniRule"/>
</dbReference>
<dbReference type="GO" id="GO:0043937">
    <property type="term" value="P:regulation of sporulation"/>
    <property type="evidence" value="ECO:0007669"/>
    <property type="project" value="InterPro"/>
</dbReference>
<dbReference type="FunFam" id="3.10.28.10:FF:000001">
    <property type="entry name" value="Probable cell division protein WhiA"/>
    <property type="match status" value="1"/>
</dbReference>
<dbReference type="Gene3D" id="3.10.28.10">
    <property type="entry name" value="Homing endonucleases"/>
    <property type="match status" value="1"/>
</dbReference>
<dbReference type="HAMAP" id="MF_01420">
    <property type="entry name" value="HTH_type_WhiA"/>
    <property type="match status" value="1"/>
</dbReference>
<dbReference type="InterPro" id="IPR027434">
    <property type="entry name" value="Homing_endonucl"/>
</dbReference>
<dbReference type="InterPro" id="IPR018478">
    <property type="entry name" value="Sporu_reg_WhiA_N_dom"/>
</dbReference>
<dbReference type="InterPro" id="IPR003802">
    <property type="entry name" value="Sporulation_regulator_WhiA"/>
</dbReference>
<dbReference type="InterPro" id="IPR023054">
    <property type="entry name" value="Sporulation_regulator_WhiA_C"/>
</dbReference>
<dbReference type="InterPro" id="IPR039518">
    <property type="entry name" value="WhiA_LAGLIDADG_dom"/>
</dbReference>
<dbReference type="NCBIfam" id="TIGR00647">
    <property type="entry name" value="DNA_bind_WhiA"/>
    <property type="match status" value="1"/>
</dbReference>
<dbReference type="PANTHER" id="PTHR37307">
    <property type="entry name" value="CELL DIVISION PROTEIN WHIA-RELATED"/>
    <property type="match status" value="1"/>
</dbReference>
<dbReference type="PANTHER" id="PTHR37307:SF1">
    <property type="entry name" value="CELL DIVISION PROTEIN WHIA-RELATED"/>
    <property type="match status" value="1"/>
</dbReference>
<dbReference type="Pfam" id="PF02650">
    <property type="entry name" value="HTH_WhiA"/>
    <property type="match status" value="1"/>
</dbReference>
<dbReference type="Pfam" id="PF14527">
    <property type="entry name" value="LAGLIDADG_WhiA"/>
    <property type="match status" value="1"/>
</dbReference>
<dbReference type="Pfam" id="PF10298">
    <property type="entry name" value="WhiA_N"/>
    <property type="match status" value="1"/>
</dbReference>
<organism>
    <name type="scientific">Mycobacterium marinum (strain ATCC BAA-535 / M)</name>
    <dbReference type="NCBI Taxonomy" id="216594"/>
    <lineage>
        <taxon>Bacteria</taxon>
        <taxon>Bacillati</taxon>
        <taxon>Actinomycetota</taxon>
        <taxon>Actinomycetes</taxon>
        <taxon>Mycobacteriales</taxon>
        <taxon>Mycobacteriaceae</taxon>
        <taxon>Mycobacterium</taxon>
        <taxon>Mycobacterium ulcerans group</taxon>
    </lineage>
</organism>
<name>WHIA_MYCMM</name>
<sequence>MAMTTEVKDELSRLVVKSVSARRAEVTSLLRFAGGLHIVAGRVVVEAEVDLGSIARRLRKDIFDLYGYSAVVHVLSASGIRKNTRYVLRVANDGEALARQTGLLDMRGRPVRGLPAQVVGGSIGDAEAAWRGAFLAHGSLTEPGRSSALEVSCPGPEAALALVGAARRLGVGAKAREVRGADRVVVRDGEAIGALLTRMGAQDTRLVWEERRMRREVRATANRLANFDDANLRRSARAAVAAAARVERALEILGDTVPDHLASAGKLRVEHRQASLEELGRLADPPMTKDAVAGRIRRLLSMADRKAKVEGIPDTESAVTPDLLEDA</sequence>